<feature type="chain" id="PRO_0000103028" description="SsrA-binding protein">
    <location>
        <begin position="1"/>
        <end position="154"/>
    </location>
</feature>
<reference key="1">
    <citation type="journal article" date="2005" name="J. Bacteriol.">
        <title>Insights on evolution of virulence and resistance from the complete genome analysis of an early methicillin-resistant Staphylococcus aureus strain and a biofilm-producing methicillin-resistant Staphylococcus epidermidis strain.</title>
        <authorList>
            <person name="Gill S.R."/>
            <person name="Fouts D.E."/>
            <person name="Archer G.L."/>
            <person name="Mongodin E.F."/>
            <person name="DeBoy R.T."/>
            <person name="Ravel J."/>
            <person name="Paulsen I.T."/>
            <person name="Kolonay J.F."/>
            <person name="Brinkac L.M."/>
            <person name="Beanan M.J."/>
            <person name="Dodson R.J."/>
            <person name="Daugherty S.C."/>
            <person name="Madupu R."/>
            <person name="Angiuoli S.V."/>
            <person name="Durkin A.S."/>
            <person name="Haft D.H."/>
            <person name="Vamathevan J.J."/>
            <person name="Khouri H."/>
            <person name="Utterback T.R."/>
            <person name="Lee C."/>
            <person name="Dimitrov G."/>
            <person name="Jiang L."/>
            <person name="Qin H."/>
            <person name="Weidman J."/>
            <person name="Tran K."/>
            <person name="Kang K.H."/>
            <person name="Hance I.R."/>
            <person name="Nelson K.E."/>
            <person name="Fraser C.M."/>
        </authorList>
    </citation>
    <scope>NUCLEOTIDE SEQUENCE [LARGE SCALE GENOMIC DNA]</scope>
    <source>
        <strain>COL</strain>
    </source>
</reference>
<proteinExistence type="inferred from homology"/>
<accession>Q5HHN6</accession>
<evidence type="ECO:0000255" key="1">
    <source>
        <dbReference type="HAMAP-Rule" id="MF_00023"/>
    </source>
</evidence>
<sequence length="154" mass="17756">MAKKKSPGTLAENRKARHDYNIEDTIEAGIVLQGTEIKSIRRGSANLKDSYAQVKNGEMYLNNMHIAPYEEGNRFNHDPLRSRKLLLHKREIIKLGDQTREIGYSIVPLKLYLKHGHCKVLLGVARGKKKYDKRQALKEKAVKRDVARDMKARY</sequence>
<protein>
    <recommendedName>
        <fullName evidence="1">SsrA-binding protein</fullName>
    </recommendedName>
    <alternativeName>
        <fullName evidence="1">Small protein B</fullName>
    </alternativeName>
</protein>
<comment type="function">
    <text evidence="1">Required for rescue of stalled ribosomes mediated by trans-translation. Binds to transfer-messenger RNA (tmRNA), required for stable association of tmRNA with ribosomes. tmRNA and SmpB together mimic tRNA shape, replacing the anticodon stem-loop with SmpB. tmRNA is encoded by the ssrA gene; the 2 termini fold to resemble tRNA(Ala) and it encodes a 'tag peptide', a short internal open reading frame. During trans-translation Ala-aminoacylated tmRNA acts like a tRNA, entering the A-site of stalled ribosomes, displacing the stalled mRNA. The ribosome then switches to translate the ORF on the tmRNA; the nascent peptide is terminated with the 'tag peptide' encoded by the tmRNA and targeted for degradation. The ribosome is freed to recommence translation, which seems to be the essential function of trans-translation.</text>
</comment>
<comment type="subcellular location">
    <subcellularLocation>
        <location evidence="1">Cytoplasm</location>
    </subcellularLocation>
    <text evidence="1">The tmRNA-SmpB complex associates with stalled 70S ribosomes.</text>
</comment>
<comment type="similarity">
    <text evidence="1">Belongs to the SmpB family.</text>
</comment>
<gene>
    <name evidence="1" type="primary">smpB</name>
    <name type="ordered locus">SACOL0847</name>
</gene>
<keyword id="KW-0963">Cytoplasm</keyword>
<keyword id="KW-0694">RNA-binding</keyword>
<name>SSRP_STAAC</name>
<organism>
    <name type="scientific">Staphylococcus aureus (strain COL)</name>
    <dbReference type="NCBI Taxonomy" id="93062"/>
    <lineage>
        <taxon>Bacteria</taxon>
        <taxon>Bacillati</taxon>
        <taxon>Bacillota</taxon>
        <taxon>Bacilli</taxon>
        <taxon>Bacillales</taxon>
        <taxon>Staphylococcaceae</taxon>
        <taxon>Staphylococcus</taxon>
    </lineage>
</organism>
<dbReference type="EMBL" id="CP000046">
    <property type="protein sequence ID" value="AAW36403.1"/>
    <property type="molecule type" value="Genomic_DNA"/>
</dbReference>
<dbReference type="RefSeq" id="WP_001085185.1">
    <property type="nucleotide sequence ID" value="NZ_JBGOFO010000005.1"/>
</dbReference>
<dbReference type="SMR" id="Q5HHN6"/>
<dbReference type="KEGG" id="sac:SACOL0847"/>
<dbReference type="HOGENOM" id="CLU_108953_0_0_9"/>
<dbReference type="Proteomes" id="UP000000530">
    <property type="component" value="Chromosome"/>
</dbReference>
<dbReference type="GO" id="GO:0005829">
    <property type="term" value="C:cytosol"/>
    <property type="evidence" value="ECO:0007669"/>
    <property type="project" value="TreeGrafter"/>
</dbReference>
<dbReference type="GO" id="GO:0003723">
    <property type="term" value="F:RNA binding"/>
    <property type="evidence" value="ECO:0007669"/>
    <property type="project" value="UniProtKB-UniRule"/>
</dbReference>
<dbReference type="GO" id="GO:0070929">
    <property type="term" value="P:trans-translation"/>
    <property type="evidence" value="ECO:0007669"/>
    <property type="project" value="UniProtKB-UniRule"/>
</dbReference>
<dbReference type="CDD" id="cd09294">
    <property type="entry name" value="SmpB"/>
    <property type="match status" value="1"/>
</dbReference>
<dbReference type="Gene3D" id="2.40.280.10">
    <property type="match status" value="1"/>
</dbReference>
<dbReference type="HAMAP" id="MF_00023">
    <property type="entry name" value="SmpB"/>
    <property type="match status" value="1"/>
</dbReference>
<dbReference type="InterPro" id="IPR023620">
    <property type="entry name" value="SmpB"/>
</dbReference>
<dbReference type="InterPro" id="IPR000037">
    <property type="entry name" value="SsrA-bd_prot"/>
</dbReference>
<dbReference type="InterPro" id="IPR020081">
    <property type="entry name" value="SsrA-bd_prot_CS"/>
</dbReference>
<dbReference type="NCBIfam" id="NF003843">
    <property type="entry name" value="PRK05422.1"/>
    <property type="match status" value="1"/>
</dbReference>
<dbReference type="NCBIfam" id="TIGR00086">
    <property type="entry name" value="smpB"/>
    <property type="match status" value="1"/>
</dbReference>
<dbReference type="PANTHER" id="PTHR30308:SF2">
    <property type="entry name" value="SSRA-BINDING PROTEIN"/>
    <property type="match status" value="1"/>
</dbReference>
<dbReference type="PANTHER" id="PTHR30308">
    <property type="entry name" value="TMRNA-BINDING COMPONENT OF TRANS-TRANSLATION TAGGING COMPLEX"/>
    <property type="match status" value="1"/>
</dbReference>
<dbReference type="Pfam" id="PF01668">
    <property type="entry name" value="SmpB"/>
    <property type="match status" value="1"/>
</dbReference>
<dbReference type="SUPFAM" id="SSF74982">
    <property type="entry name" value="Small protein B (SmpB)"/>
    <property type="match status" value="1"/>
</dbReference>
<dbReference type="PROSITE" id="PS01317">
    <property type="entry name" value="SSRP"/>
    <property type="match status" value="1"/>
</dbReference>